<name>SCPB_DESRM</name>
<feature type="chain" id="PRO_1000073662" description="Segregation and condensation protein B">
    <location>
        <begin position="1"/>
        <end position="181"/>
    </location>
</feature>
<protein>
    <recommendedName>
        <fullName evidence="1">Segregation and condensation protein B</fullName>
    </recommendedName>
</protein>
<reference key="1">
    <citation type="submission" date="2007-03" db="EMBL/GenBank/DDBJ databases">
        <title>Complete sequence of Desulfotomaculum reducens MI-1.</title>
        <authorList>
            <consortium name="US DOE Joint Genome Institute"/>
            <person name="Copeland A."/>
            <person name="Lucas S."/>
            <person name="Lapidus A."/>
            <person name="Barry K."/>
            <person name="Detter J.C."/>
            <person name="Glavina del Rio T."/>
            <person name="Hammon N."/>
            <person name="Israni S."/>
            <person name="Dalin E."/>
            <person name="Tice H."/>
            <person name="Pitluck S."/>
            <person name="Sims D."/>
            <person name="Brettin T."/>
            <person name="Bruce D."/>
            <person name="Han C."/>
            <person name="Tapia R."/>
            <person name="Schmutz J."/>
            <person name="Larimer F."/>
            <person name="Land M."/>
            <person name="Hauser L."/>
            <person name="Kyrpides N."/>
            <person name="Kim E."/>
            <person name="Tebo B.M."/>
            <person name="Richardson P."/>
        </authorList>
    </citation>
    <scope>NUCLEOTIDE SEQUENCE [LARGE SCALE GENOMIC DNA]</scope>
    <source>
        <strain>ATCC BAA-1160 / DSM 100696 / MI-1</strain>
    </source>
</reference>
<comment type="function">
    <text evidence="1">Participates in chromosomal partition during cell division. May act via the formation of a condensin-like complex containing Smc and ScpA that pull DNA away from mid-cell into both cell halves.</text>
</comment>
<comment type="subunit">
    <text evidence="1">Homodimer. Homodimerization may be required to stabilize the binding of ScpA to the Smc head domains. Component of a cohesin-like complex composed of ScpA, ScpB and the Smc homodimer, in which ScpA and ScpB bind to the head domain of Smc. The presence of the three proteins is required for the association of the complex with DNA.</text>
</comment>
<comment type="subcellular location">
    <subcellularLocation>
        <location evidence="1">Cytoplasm</location>
    </subcellularLocation>
    <text evidence="1">Associated with two foci at the outer edges of the nucleoid region in young cells, and at four foci within both cell halves in older cells.</text>
</comment>
<comment type="similarity">
    <text evidence="1">Belongs to the ScpB family.</text>
</comment>
<sequence length="181" mass="20279">MAVLFRDQTKSALEALLFVASEPLTVQALARIVEIDVADALELLLELAKEYQDRPGGLKIVQVSDTWQICTRPECAPYIERLYRKSGTGLSKAAIETLAIIAYRQPITRSEVEMIRGVKVDSPINTLLERNLIEEKGRREGPGRPVLYGTTLEFLKHFGLKDVSELPPLEEFLVEGETIDI</sequence>
<organism>
    <name type="scientific">Desulforamulus reducens (strain ATCC BAA-1160 / DSM 100696 / MI-1)</name>
    <name type="common">Desulfotomaculum reducens</name>
    <dbReference type="NCBI Taxonomy" id="349161"/>
    <lineage>
        <taxon>Bacteria</taxon>
        <taxon>Bacillati</taxon>
        <taxon>Bacillota</taxon>
        <taxon>Clostridia</taxon>
        <taxon>Eubacteriales</taxon>
        <taxon>Peptococcaceae</taxon>
        <taxon>Desulforamulus</taxon>
    </lineage>
</organism>
<accession>A4J3L6</accession>
<proteinExistence type="inferred from homology"/>
<keyword id="KW-0131">Cell cycle</keyword>
<keyword id="KW-0132">Cell division</keyword>
<keyword id="KW-0159">Chromosome partition</keyword>
<keyword id="KW-0963">Cytoplasm</keyword>
<keyword id="KW-1185">Reference proteome</keyword>
<gene>
    <name evidence="1" type="primary">scpB</name>
    <name type="ordered locus">Dred_1135</name>
</gene>
<evidence type="ECO:0000255" key="1">
    <source>
        <dbReference type="HAMAP-Rule" id="MF_01804"/>
    </source>
</evidence>
<dbReference type="EMBL" id="CP000612">
    <property type="protein sequence ID" value="ABO49669.1"/>
    <property type="molecule type" value="Genomic_DNA"/>
</dbReference>
<dbReference type="RefSeq" id="WP_011877495.1">
    <property type="nucleotide sequence ID" value="NC_009253.1"/>
</dbReference>
<dbReference type="SMR" id="A4J3L6"/>
<dbReference type="STRING" id="349161.Dred_1135"/>
<dbReference type="KEGG" id="drm:Dred_1135"/>
<dbReference type="eggNOG" id="COG1386">
    <property type="taxonomic scope" value="Bacteria"/>
</dbReference>
<dbReference type="HOGENOM" id="CLU_045647_5_3_9"/>
<dbReference type="OrthoDB" id="9806226at2"/>
<dbReference type="Proteomes" id="UP000001556">
    <property type="component" value="Chromosome"/>
</dbReference>
<dbReference type="GO" id="GO:0005737">
    <property type="term" value="C:cytoplasm"/>
    <property type="evidence" value="ECO:0007669"/>
    <property type="project" value="UniProtKB-SubCell"/>
</dbReference>
<dbReference type="GO" id="GO:0051301">
    <property type="term" value="P:cell division"/>
    <property type="evidence" value="ECO:0007669"/>
    <property type="project" value="UniProtKB-KW"/>
</dbReference>
<dbReference type="GO" id="GO:0051304">
    <property type="term" value="P:chromosome separation"/>
    <property type="evidence" value="ECO:0007669"/>
    <property type="project" value="InterPro"/>
</dbReference>
<dbReference type="GO" id="GO:0006260">
    <property type="term" value="P:DNA replication"/>
    <property type="evidence" value="ECO:0007669"/>
    <property type="project" value="UniProtKB-UniRule"/>
</dbReference>
<dbReference type="Gene3D" id="1.10.10.10">
    <property type="entry name" value="Winged helix-like DNA-binding domain superfamily/Winged helix DNA-binding domain"/>
    <property type="match status" value="2"/>
</dbReference>
<dbReference type="HAMAP" id="MF_01804">
    <property type="entry name" value="ScpB"/>
    <property type="match status" value="1"/>
</dbReference>
<dbReference type="InterPro" id="IPR005234">
    <property type="entry name" value="ScpB_csome_segregation"/>
</dbReference>
<dbReference type="InterPro" id="IPR036388">
    <property type="entry name" value="WH-like_DNA-bd_sf"/>
</dbReference>
<dbReference type="InterPro" id="IPR036390">
    <property type="entry name" value="WH_DNA-bd_sf"/>
</dbReference>
<dbReference type="NCBIfam" id="TIGR00281">
    <property type="entry name" value="SMC-Scp complex subunit ScpB"/>
    <property type="match status" value="1"/>
</dbReference>
<dbReference type="PANTHER" id="PTHR34298">
    <property type="entry name" value="SEGREGATION AND CONDENSATION PROTEIN B"/>
    <property type="match status" value="1"/>
</dbReference>
<dbReference type="PANTHER" id="PTHR34298:SF2">
    <property type="entry name" value="SEGREGATION AND CONDENSATION PROTEIN B"/>
    <property type="match status" value="1"/>
</dbReference>
<dbReference type="Pfam" id="PF04079">
    <property type="entry name" value="SMC_ScpB"/>
    <property type="match status" value="1"/>
</dbReference>
<dbReference type="PIRSF" id="PIRSF019345">
    <property type="entry name" value="ScpB"/>
    <property type="match status" value="1"/>
</dbReference>
<dbReference type="SUPFAM" id="SSF46785">
    <property type="entry name" value="Winged helix' DNA-binding domain"/>
    <property type="match status" value="2"/>
</dbReference>